<proteinExistence type="inferred from homology"/>
<reference key="1">
    <citation type="journal article" date="2003" name="Nature">
        <title>The genome sequence of the filamentous fungus Neurospora crassa.</title>
        <authorList>
            <person name="Galagan J.E."/>
            <person name="Calvo S.E."/>
            <person name="Borkovich K.A."/>
            <person name="Selker E.U."/>
            <person name="Read N.D."/>
            <person name="Jaffe D.B."/>
            <person name="FitzHugh W."/>
            <person name="Ma L.-J."/>
            <person name="Smirnov S."/>
            <person name="Purcell S."/>
            <person name="Rehman B."/>
            <person name="Elkins T."/>
            <person name="Engels R."/>
            <person name="Wang S."/>
            <person name="Nielsen C.B."/>
            <person name="Butler J."/>
            <person name="Endrizzi M."/>
            <person name="Qui D."/>
            <person name="Ianakiev P."/>
            <person name="Bell-Pedersen D."/>
            <person name="Nelson M.A."/>
            <person name="Werner-Washburne M."/>
            <person name="Selitrennikoff C.P."/>
            <person name="Kinsey J.A."/>
            <person name="Braun E.L."/>
            <person name="Zelter A."/>
            <person name="Schulte U."/>
            <person name="Kothe G.O."/>
            <person name="Jedd G."/>
            <person name="Mewes H.-W."/>
            <person name="Staben C."/>
            <person name="Marcotte E."/>
            <person name="Greenberg D."/>
            <person name="Roy A."/>
            <person name="Foley K."/>
            <person name="Naylor J."/>
            <person name="Stange-Thomann N."/>
            <person name="Barrett R."/>
            <person name="Gnerre S."/>
            <person name="Kamal M."/>
            <person name="Kamvysselis M."/>
            <person name="Mauceli E.W."/>
            <person name="Bielke C."/>
            <person name="Rudd S."/>
            <person name="Frishman D."/>
            <person name="Krystofova S."/>
            <person name="Rasmussen C."/>
            <person name="Metzenberg R.L."/>
            <person name="Perkins D.D."/>
            <person name="Kroken S."/>
            <person name="Cogoni C."/>
            <person name="Macino G."/>
            <person name="Catcheside D.E.A."/>
            <person name="Li W."/>
            <person name="Pratt R.J."/>
            <person name="Osmani S.A."/>
            <person name="DeSouza C.P.C."/>
            <person name="Glass N.L."/>
            <person name="Orbach M.J."/>
            <person name="Berglund J.A."/>
            <person name="Voelker R."/>
            <person name="Yarden O."/>
            <person name="Plamann M."/>
            <person name="Seiler S."/>
            <person name="Dunlap J.C."/>
            <person name="Radford A."/>
            <person name="Aramayo R."/>
            <person name="Natvig D.O."/>
            <person name="Alex L.A."/>
            <person name="Mannhaupt G."/>
            <person name="Ebbole D.J."/>
            <person name="Freitag M."/>
            <person name="Paulsen I."/>
            <person name="Sachs M.S."/>
            <person name="Lander E.S."/>
            <person name="Nusbaum C."/>
            <person name="Birren B.W."/>
        </authorList>
    </citation>
    <scope>NUCLEOTIDE SEQUENCE [LARGE SCALE GENOMIC DNA]</scope>
    <source>
        <strain>ATCC 24698 / 74-OR23-1A / CBS 708.71 / DSM 1257 / FGSC 987</strain>
    </source>
</reference>
<gene>
    <name type="primary">nut2</name>
    <name type="synonym">med10</name>
    <name type="ORF">NCU00220</name>
</gene>
<sequence>MAPVTATHQEAQESVKNVIQDLLNLMVQVSQYDTNPSSSNNNTPTSSRASGGGGGGGGGHASSRDIIAQSLQTLDASLLSVYRTANLLPSSPSSGPSNNQPQQGTTELERAEAAQFASTFNNTHNPYAPHVHQPGPQNPGIPIPLITYVENGRNPDVYTREFIELVRRSNQLMRGKMHAFRDFRDVLAGEMEAALPELREDIKRVVEATGGPGPAEGSEERAREGVVGSLSAGGEGQQGQGQGQQGQGQQSGQ</sequence>
<dbReference type="EMBL" id="CM002238">
    <property type="protein sequence ID" value="EAA27369.1"/>
    <property type="molecule type" value="Genomic_DNA"/>
</dbReference>
<dbReference type="RefSeq" id="XP_956605.1">
    <property type="nucleotide sequence ID" value="XM_951512.2"/>
</dbReference>
<dbReference type="SMR" id="Q7RXK7"/>
<dbReference type="FunCoup" id="Q7RXK7">
    <property type="interactions" value="540"/>
</dbReference>
<dbReference type="STRING" id="367110.Q7RXK7"/>
<dbReference type="PaxDb" id="5141-EFNCRP00000000249"/>
<dbReference type="EnsemblFungi" id="EAA27369">
    <property type="protein sequence ID" value="EAA27369"/>
    <property type="gene ID" value="NCU00220"/>
</dbReference>
<dbReference type="GeneID" id="3872752"/>
<dbReference type="KEGG" id="ncr:NCU00220"/>
<dbReference type="VEuPathDB" id="FungiDB:NCU00220"/>
<dbReference type="HOGENOM" id="CLU_096169_0_0_1"/>
<dbReference type="InParanoid" id="Q7RXK7"/>
<dbReference type="OrthoDB" id="337270at2759"/>
<dbReference type="Proteomes" id="UP000001805">
    <property type="component" value="Chromosome 3, Linkage Group III"/>
</dbReference>
<dbReference type="GO" id="GO:0016592">
    <property type="term" value="C:mediator complex"/>
    <property type="evidence" value="ECO:0007669"/>
    <property type="project" value="InterPro"/>
</dbReference>
<dbReference type="GO" id="GO:0003712">
    <property type="term" value="F:transcription coregulator activity"/>
    <property type="evidence" value="ECO:0007669"/>
    <property type="project" value="InterPro"/>
</dbReference>
<dbReference type="GO" id="GO:0006357">
    <property type="term" value="P:regulation of transcription by RNA polymerase II"/>
    <property type="evidence" value="ECO:0007669"/>
    <property type="project" value="InterPro"/>
</dbReference>
<dbReference type="InterPro" id="IPR019145">
    <property type="entry name" value="Mediator_Med10"/>
</dbReference>
<dbReference type="PANTHER" id="PTHR13345">
    <property type="entry name" value="MEDIATOR OF RNA POLYMERASE II TRANSCRIPTION SUBUNIT 10"/>
    <property type="match status" value="1"/>
</dbReference>
<dbReference type="PANTHER" id="PTHR13345:SF13">
    <property type="entry name" value="MEDIATOR OF RNA POLYMERASE II TRANSCRIPTION SUBUNIT 10"/>
    <property type="match status" value="1"/>
</dbReference>
<dbReference type="Pfam" id="PF09748">
    <property type="entry name" value="Med10"/>
    <property type="match status" value="1"/>
</dbReference>
<name>MED10_NEUCR</name>
<protein>
    <recommendedName>
        <fullName>Mediator of RNA polymerase II transcription subunit 10</fullName>
    </recommendedName>
    <alternativeName>
        <fullName>Mediator complex subunit 10</fullName>
    </alternativeName>
</protein>
<organism>
    <name type="scientific">Neurospora crassa (strain ATCC 24698 / 74-OR23-1A / CBS 708.71 / DSM 1257 / FGSC 987)</name>
    <dbReference type="NCBI Taxonomy" id="367110"/>
    <lineage>
        <taxon>Eukaryota</taxon>
        <taxon>Fungi</taxon>
        <taxon>Dikarya</taxon>
        <taxon>Ascomycota</taxon>
        <taxon>Pezizomycotina</taxon>
        <taxon>Sordariomycetes</taxon>
        <taxon>Sordariomycetidae</taxon>
        <taxon>Sordariales</taxon>
        <taxon>Sordariaceae</taxon>
        <taxon>Neurospora</taxon>
    </lineage>
</organism>
<feature type="chain" id="PRO_0000303174" description="Mediator of RNA polymerase II transcription subunit 10">
    <location>
        <begin position="1"/>
        <end position="253"/>
    </location>
</feature>
<feature type="region of interest" description="Disordered" evidence="2">
    <location>
        <begin position="32"/>
        <end position="63"/>
    </location>
</feature>
<feature type="region of interest" description="Disordered" evidence="2">
    <location>
        <begin position="88"/>
        <end position="109"/>
    </location>
</feature>
<feature type="region of interest" description="Disordered" evidence="2">
    <location>
        <begin position="206"/>
        <end position="253"/>
    </location>
</feature>
<feature type="compositionally biased region" description="Low complexity" evidence="2">
    <location>
        <begin position="34"/>
        <end position="47"/>
    </location>
</feature>
<feature type="compositionally biased region" description="Gly residues" evidence="2">
    <location>
        <begin position="50"/>
        <end position="60"/>
    </location>
</feature>
<feature type="compositionally biased region" description="Low complexity" evidence="2">
    <location>
        <begin position="88"/>
        <end position="104"/>
    </location>
</feature>
<feature type="compositionally biased region" description="Gly residues" evidence="2">
    <location>
        <begin position="231"/>
        <end position="253"/>
    </location>
</feature>
<comment type="function">
    <text evidence="1">Component of the Mediator complex, a coactivator involved in the regulated transcription of nearly all RNA polymerase II-dependent genes. Mediator functions as a bridge to convey information from gene-specific regulatory proteins to the basal RNA polymerase II transcription machinery. Mediator is recruited to promoters by direct interactions with regulatory proteins and serves as a scaffold for the assembly of a functional preinitiation complex with RNA polymerase II and the general transcription factors (By similarity).</text>
</comment>
<comment type="subunit">
    <text evidence="1">Component of the Mediator complex.</text>
</comment>
<comment type="subcellular location">
    <subcellularLocation>
        <location evidence="1">Nucleus</location>
    </subcellularLocation>
</comment>
<comment type="similarity">
    <text evidence="3">Belongs to the Mediator complex subunit 10 family.</text>
</comment>
<keyword id="KW-0010">Activator</keyword>
<keyword id="KW-0539">Nucleus</keyword>
<keyword id="KW-1185">Reference proteome</keyword>
<keyword id="KW-0804">Transcription</keyword>
<keyword id="KW-0805">Transcription regulation</keyword>
<evidence type="ECO:0000250" key="1"/>
<evidence type="ECO:0000256" key="2">
    <source>
        <dbReference type="SAM" id="MobiDB-lite"/>
    </source>
</evidence>
<evidence type="ECO:0000305" key="3"/>
<accession>Q7RXK7</accession>